<keyword id="KW-0010">Activator</keyword>
<keyword id="KW-0963">Cytoplasm</keyword>
<keyword id="KW-0238">DNA-binding</keyword>
<keyword id="KW-0678">Repressor</keyword>
<keyword id="KW-0804">Transcription</keyword>
<keyword id="KW-0805">Transcription regulation</keyword>
<keyword id="KW-0843">Virulence</keyword>
<feature type="initiator methionine" description="Removed" evidence="1">
    <location>
        <position position="1"/>
    </location>
</feature>
<feature type="chain" id="PRO_0000240488" description="HTH-type transcriptional regulator SarR">
    <location>
        <begin position="2"/>
        <end position="115"/>
    </location>
</feature>
<feature type="DNA-binding region" description="H-T-H motif" evidence="2">
    <location>
        <begin position="51"/>
        <end position="74"/>
    </location>
</feature>
<protein>
    <recommendedName>
        <fullName>HTH-type transcriptional regulator SarR</fullName>
    </recommendedName>
    <alternativeName>
        <fullName>Staphylococcal accessory regulator R</fullName>
    </alternativeName>
</protein>
<comment type="function">
    <text evidence="1">Negative regulator of sarA transcription at late exponential and stationary growth phases. It contributes to the modulation of target genes downstream of the sarA regulatory cascade. Also, positively regulates expression of primary transcripts RNAII and RNAIII generated by agr (virulence accessory gene regulator) locus (By similarity).</text>
</comment>
<comment type="subunit">
    <text evidence="1">Homodimer.</text>
</comment>
<comment type="subcellular location">
    <subcellularLocation>
        <location evidence="1">Cytoplasm</location>
    </subcellularLocation>
</comment>
<comment type="similarity">
    <text evidence="3">Belongs to the SarA family.</text>
</comment>
<organism>
    <name type="scientific">Staphylococcus aureus (strain USA300)</name>
    <dbReference type="NCBI Taxonomy" id="367830"/>
    <lineage>
        <taxon>Bacteria</taxon>
        <taxon>Bacillati</taxon>
        <taxon>Bacillota</taxon>
        <taxon>Bacilli</taxon>
        <taxon>Bacillales</taxon>
        <taxon>Staphylococcaceae</taxon>
        <taxon>Staphylococcus</taxon>
    </lineage>
</organism>
<proteinExistence type="inferred from homology"/>
<name>SARR_STAA3</name>
<dbReference type="EMBL" id="CP000255">
    <property type="protein sequence ID" value="ABD20487.1"/>
    <property type="molecule type" value="Genomic_DNA"/>
</dbReference>
<dbReference type="RefSeq" id="WP_000036076.1">
    <property type="nucleotide sequence ID" value="NZ_CP027476.1"/>
</dbReference>
<dbReference type="SMR" id="Q2FEJ8"/>
<dbReference type="KEGG" id="saa:SAUSA300_2245"/>
<dbReference type="HOGENOM" id="CLU_164084_0_0_9"/>
<dbReference type="OMA" id="HDERTVI"/>
<dbReference type="Proteomes" id="UP000001939">
    <property type="component" value="Chromosome"/>
</dbReference>
<dbReference type="GO" id="GO:0005737">
    <property type="term" value="C:cytoplasm"/>
    <property type="evidence" value="ECO:0007669"/>
    <property type="project" value="UniProtKB-SubCell"/>
</dbReference>
<dbReference type="GO" id="GO:0003677">
    <property type="term" value="F:DNA binding"/>
    <property type="evidence" value="ECO:0007669"/>
    <property type="project" value="UniProtKB-KW"/>
</dbReference>
<dbReference type="GO" id="GO:0003700">
    <property type="term" value="F:DNA-binding transcription factor activity"/>
    <property type="evidence" value="ECO:0007669"/>
    <property type="project" value="InterPro"/>
</dbReference>
<dbReference type="GO" id="GO:0006950">
    <property type="term" value="P:response to stress"/>
    <property type="evidence" value="ECO:0007669"/>
    <property type="project" value="TreeGrafter"/>
</dbReference>
<dbReference type="FunFam" id="1.10.10.10:FF:000578">
    <property type="entry name" value="HTH-type transcriptional regulator SarR"/>
    <property type="match status" value="1"/>
</dbReference>
<dbReference type="Gene3D" id="1.10.10.10">
    <property type="entry name" value="Winged helix-like DNA-binding domain superfamily/Winged helix DNA-binding domain"/>
    <property type="match status" value="1"/>
</dbReference>
<dbReference type="InterPro" id="IPR039422">
    <property type="entry name" value="MarR/SlyA-like"/>
</dbReference>
<dbReference type="InterPro" id="IPR010166">
    <property type="entry name" value="SarA/Rot_dom"/>
</dbReference>
<dbReference type="InterPro" id="IPR055166">
    <property type="entry name" value="Transc_reg_Sar_Rot_HTH"/>
</dbReference>
<dbReference type="InterPro" id="IPR036388">
    <property type="entry name" value="WH-like_DNA-bd_sf"/>
</dbReference>
<dbReference type="InterPro" id="IPR036390">
    <property type="entry name" value="WH_DNA-bd_sf"/>
</dbReference>
<dbReference type="NCBIfam" id="TIGR01889">
    <property type="entry name" value="Staph_reg_Sar"/>
    <property type="match status" value="1"/>
</dbReference>
<dbReference type="PANTHER" id="PTHR33164:SF56">
    <property type="entry name" value="HTH-TYPE TRANSCRIPTIONAL REGULATOR MHQR"/>
    <property type="match status" value="1"/>
</dbReference>
<dbReference type="PANTHER" id="PTHR33164">
    <property type="entry name" value="TRANSCRIPTIONAL REGULATOR, MARR FAMILY"/>
    <property type="match status" value="1"/>
</dbReference>
<dbReference type="Pfam" id="PF22381">
    <property type="entry name" value="Staph_reg_Sar_Rot"/>
    <property type="match status" value="1"/>
</dbReference>
<dbReference type="SUPFAM" id="SSF46785">
    <property type="entry name" value="Winged helix' DNA-binding domain"/>
    <property type="match status" value="1"/>
</dbReference>
<reference key="1">
    <citation type="journal article" date="2006" name="Lancet">
        <title>Complete genome sequence of USA300, an epidemic clone of community-acquired meticillin-resistant Staphylococcus aureus.</title>
        <authorList>
            <person name="Diep B.A."/>
            <person name="Gill S.R."/>
            <person name="Chang R.F."/>
            <person name="Phan T.H."/>
            <person name="Chen J.H."/>
            <person name="Davidson M.G."/>
            <person name="Lin F."/>
            <person name="Lin J."/>
            <person name="Carleton H.A."/>
            <person name="Mongodin E.F."/>
            <person name="Sensabaugh G.F."/>
            <person name="Perdreau-Remington F."/>
        </authorList>
    </citation>
    <scope>NUCLEOTIDE SEQUENCE [LARGE SCALE GENOMIC DNA]</scope>
    <source>
        <strain>USA300</strain>
    </source>
</reference>
<gene>
    <name type="primary">sarR</name>
    <name type="ordered locus">SAUSA300_2245</name>
</gene>
<evidence type="ECO:0000250" key="1"/>
<evidence type="ECO:0000255" key="2"/>
<evidence type="ECO:0000305" key="3"/>
<accession>Q2FEJ8</accession>
<sequence>MSKINDINDLVNATFQVKKFFRDTKKKFNLNYEEIYILNHILRSESNEISSKEIAKCSEFKPYYLTKALQKLKDLKLLSKKRSLQDERTVIVYVTDTQKANIQKLISELEEYIKN</sequence>